<keyword id="KW-0012">Acyltransferase</keyword>
<keyword id="KW-0997">Cell inner membrane</keyword>
<keyword id="KW-1003">Cell membrane</keyword>
<keyword id="KW-0444">Lipid biosynthesis</keyword>
<keyword id="KW-0443">Lipid metabolism</keyword>
<keyword id="KW-0472">Membrane</keyword>
<keyword id="KW-0594">Phospholipid biosynthesis</keyword>
<keyword id="KW-1208">Phospholipid metabolism</keyword>
<keyword id="KW-0808">Transferase</keyword>
<reference key="1">
    <citation type="journal article" date="2010" name="PLoS Genet.">
        <title>Genome sequence of the plant growth promoting endophytic bacterium Enterobacter sp. 638.</title>
        <authorList>
            <person name="Taghavi S."/>
            <person name="van der Lelie D."/>
            <person name="Hoffman A."/>
            <person name="Zhang Y.B."/>
            <person name="Walla M.D."/>
            <person name="Vangronsveld J."/>
            <person name="Newman L."/>
            <person name="Monchy S."/>
        </authorList>
    </citation>
    <scope>NUCLEOTIDE SEQUENCE [LARGE SCALE GENOMIC DNA]</scope>
    <source>
        <strain>638</strain>
    </source>
</reference>
<organism>
    <name type="scientific">Enterobacter sp. (strain 638)</name>
    <dbReference type="NCBI Taxonomy" id="399742"/>
    <lineage>
        <taxon>Bacteria</taxon>
        <taxon>Pseudomonadati</taxon>
        <taxon>Pseudomonadota</taxon>
        <taxon>Gammaproteobacteria</taxon>
        <taxon>Enterobacterales</taxon>
        <taxon>Enterobacteriaceae</taxon>
        <taxon>Enterobacter</taxon>
    </lineage>
</organism>
<gene>
    <name evidence="1" type="primary">plsB</name>
    <name type="ordered locus">Ent638_0245</name>
</gene>
<protein>
    <recommendedName>
        <fullName evidence="1">Glycerol-3-phosphate acyltransferase</fullName>
        <shortName evidence="1">GPAT</shortName>
        <ecNumber evidence="1">2.3.1.15</ecNumber>
    </recommendedName>
</protein>
<proteinExistence type="inferred from homology"/>
<sequence length="806" mass="91643">MSGWPRIYYKLLNLPLSVLVKSKSIPAEPALELGLDTSRPIMYVLPYNSKADLLTLRAQCLAHDLPDPLEPLEIDGTLLPRYVFIHGGPRVFTYYTPKEESIKLFHDYLDLHRSNPDLDVQMVPVSVMFGRRPGRQKGEENPPLRMLNGVQKFFAVSWLGRDSFVRFSPSVSLRHMADEHGTDKIIAQKLARVARMHFARQRLAAVGPRLPARQDLFNKLLASKAIARAVEDEARSKKISHEKAQQNAIALMEEIAANFSYEMIRLSDRILSFTWNRLYQGINVHNAERVRQLAHDGHEIVYVPCHRSHMDYLLLSYVLYHQGLVPPHIAAGINLNFWPAGPIFRRLGAFFIRRTFKGNKLYSTVFREYLGELFSRGYSVEYFVEGGRSRTGRLLDPKTGTLSMTIQAMLRGGTRPITLVPIYIGYEHVMEVGTYAKELRGATKEKESLPQMLRGLSKLRNLGQGYVNFGEPMPLMTYLNHHVPEWRESIDPIEAIRPAWLTPTVNNIAADLMVRINNAGAANAMNLCCTALLASRQRSLTREQLTEQLDCYLDMMRHVPYSTDSTVPSVTAGQLIDHALQMNKFEVEKDTIGDIIILPREQAVLMTYYRNNIAHMLMLPSLMAAIITQHRRISRQEILRHVEVLYPMLKAELFLRWSKDELAAELDKLTEELLRQGLIAVKGDELHINPSRSRTLQLLAAGARETLQRYAITFWLLSANPSINRGTLEKESRTLAQRLSVLHGINAPEFFDKAVFSSLVLTLRDEGYISDTGDAEPGETMKVYQMLAELITSDVRLTIESATQDE</sequence>
<evidence type="ECO:0000255" key="1">
    <source>
        <dbReference type="HAMAP-Rule" id="MF_00393"/>
    </source>
</evidence>
<accession>A4W5F4</accession>
<dbReference type="EC" id="2.3.1.15" evidence="1"/>
<dbReference type="EMBL" id="CP000653">
    <property type="protein sequence ID" value="ABP58934.1"/>
    <property type="molecule type" value="Genomic_DNA"/>
</dbReference>
<dbReference type="RefSeq" id="WP_011915507.1">
    <property type="nucleotide sequence ID" value="NC_009436.1"/>
</dbReference>
<dbReference type="SMR" id="A4W5F4"/>
<dbReference type="STRING" id="399742.Ent638_0245"/>
<dbReference type="KEGG" id="ent:Ent638_0245"/>
<dbReference type="eggNOG" id="COG2937">
    <property type="taxonomic scope" value="Bacteria"/>
</dbReference>
<dbReference type="HOGENOM" id="CLU_015407_0_0_6"/>
<dbReference type="OrthoDB" id="335193at2"/>
<dbReference type="UniPathway" id="UPA00557">
    <property type="reaction ID" value="UER00612"/>
</dbReference>
<dbReference type="Proteomes" id="UP000000230">
    <property type="component" value="Chromosome"/>
</dbReference>
<dbReference type="GO" id="GO:0005886">
    <property type="term" value="C:plasma membrane"/>
    <property type="evidence" value="ECO:0007669"/>
    <property type="project" value="UniProtKB-SubCell"/>
</dbReference>
<dbReference type="GO" id="GO:0004366">
    <property type="term" value="F:glycerol-3-phosphate O-acyltransferase activity"/>
    <property type="evidence" value="ECO:0007669"/>
    <property type="project" value="UniProtKB-UniRule"/>
</dbReference>
<dbReference type="GO" id="GO:0016024">
    <property type="term" value="P:CDP-diacylglycerol biosynthetic process"/>
    <property type="evidence" value="ECO:0007669"/>
    <property type="project" value="UniProtKB-UniRule"/>
</dbReference>
<dbReference type="GO" id="GO:0006631">
    <property type="term" value="P:fatty acid metabolic process"/>
    <property type="evidence" value="ECO:0007669"/>
    <property type="project" value="TreeGrafter"/>
</dbReference>
<dbReference type="CDD" id="cd07993">
    <property type="entry name" value="LPLAT_DHAPAT-like"/>
    <property type="match status" value="1"/>
</dbReference>
<dbReference type="HAMAP" id="MF_00393">
    <property type="entry name" value="Glyc3P_acyltrans"/>
    <property type="match status" value="1"/>
</dbReference>
<dbReference type="InterPro" id="IPR022284">
    <property type="entry name" value="GPAT/DHAPAT"/>
</dbReference>
<dbReference type="InterPro" id="IPR045520">
    <property type="entry name" value="GPAT/DHAPAT_C"/>
</dbReference>
<dbReference type="InterPro" id="IPR041728">
    <property type="entry name" value="GPAT/DHAPAT_LPLAT"/>
</dbReference>
<dbReference type="InterPro" id="IPR028354">
    <property type="entry name" value="GPAT_PlsB"/>
</dbReference>
<dbReference type="InterPro" id="IPR002123">
    <property type="entry name" value="Plipid/glycerol_acylTrfase"/>
</dbReference>
<dbReference type="NCBIfam" id="TIGR03703">
    <property type="entry name" value="plsB"/>
    <property type="match status" value="1"/>
</dbReference>
<dbReference type="NCBIfam" id="NF003441">
    <property type="entry name" value="PRK04974.1"/>
    <property type="match status" value="1"/>
</dbReference>
<dbReference type="PANTHER" id="PTHR12563:SF17">
    <property type="entry name" value="DIHYDROXYACETONE PHOSPHATE ACYLTRANSFERASE"/>
    <property type="match status" value="1"/>
</dbReference>
<dbReference type="PANTHER" id="PTHR12563">
    <property type="entry name" value="GLYCEROL-3-PHOSPHATE ACYLTRANSFERASE"/>
    <property type="match status" value="1"/>
</dbReference>
<dbReference type="Pfam" id="PF01553">
    <property type="entry name" value="Acyltransferase"/>
    <property type="match status" value="1"/>
</dbReference>
<dbReference type="Pfam" id="PF19277">
    <property type="entry name" value="GPAT_C"/>
    <property type="match status" value="1"/>
</dbReference>
<dbReference type="PIRSF" id="PIRSF500064">
    <property type="entry name" value="GPAT"/>
    <property type="match status" value="1"/>
</dbReference>
<dbReference type="PIRSF" id="PIRSF000437">
    <property type="entry name" value="GPAT_DHAPAT"/>
    <property type="match status" value="1"/>
</dbReference>
<dbReference type="SMART" id="SM00563">
    <property type="entry name" value="PlsC"/>
    <property type="match status" value="1"/>
</dbReference>
<dbReference type="SUPFAM" id="SSF69593">
    <property type="entry name" value="Glycerol-3-phosphate (1)-acyltransferase"/>
    <property type="match status" value="1"/>
</dbReference>
<comment type="catalytic activity">
    <reaction evidence="1">
        <text>sn-glycerol 3-phosphate + an acyl-CoA = a 1-acyl-sn-glycero-3-phosphate + CoA</text>
        <dbReference type="Rhea" id="RHEA:15325"/>
        <dbReference type="ChEBI" id="CHEBI:57287"/>
        <dbReference type="ChEBI" id="CHEBI:57597"/>
        <dbReference type="ChEBI" id="CHEBI:57970"/>
        <dbReference type="ChEBI" id="CHEBI:58342"/>
        <dbReference type="EC" id="2.3.1.15"/>
    </reaction>
</comment>
<comment type="pathway">
    <text evidence="1">Phospholipid metabolism; CDP-diacylglycerol biosynthesis; CDP-diacylglycerol from sn-glycerol 3-phosphate: step 1/3.</text>
</comment>
<comment type="subcellular location">
    <subcellularLocation>
        <location evidence="1">Cell inner membrane</location>
        <topology evidence="1">Peripheral membrane protein</topology>
        <orientation evidence="1">Cytoplasmic side</orientation>
    </subcellularLocation>
</comment>
<comment type="domain">
    <text evidence="1">The HXXXXD motif is essential for acyltransferase activity and may constitute the binding site for the phosphate moiety of the glycerol-3-phosphate.</text>
</comment>
<comment type="similarity">
    <text evidence="1">Belongs to the GPAT/DAPAT family.</text>
</comment>
<feature type="chain" id="PRO_1000060777" description="Glycerol-3-phosphate acyltransferase">
    <location>
        <begin position="1"/>
        <end position="806"/>
    </location>
</feature>
<feature type="short sequence motif" description="HXXXXD motif">
    <location>
        <begin position="305"/>
        <end position="310"/>
    </location>
</feature>
<name>PLSB_ENT38</name>